<reference key="1">
    <citation type="submission" date="2009-07" db="EMBL/GenBank/DDBJ databases">
        <title>Complete sequence of Pectobacterium carotovorum subsp. carotovorum PC1.</title>
        <authorList>
            <consortium name="US DOE Joint Genome Institute"/>
            <person name="Lucas S."/>
            <person name="Copeland A."/>
            <person name="Lapidus A."/>
            <person name="Glavina del Rio T."/>
            <person name="Tice H."/>
            <person name="Bruce D."/>
            <person name="Goodwin L."/>
            <person name="Pitluck S."/>
            <person name="Munk A.C."/>
            <person name="Brettin T."/>
            <person name="Detter J.C."/>
            <person name="Han C."/>
            <person name="Tapia R."/>
            <person name="Larimer F."/>
            <person name="Land M."/>
            <person name="Hauser L."/>
            <person name="Kyrpides N."/>
            <person name="Mikhailova N."/>
            <person name="Balakrishnan V."/>
            <person name="Glasner J."/>
            <person name="Perna N.T."/>
        </authorList>
    </citation>
    <scope>NUCLEOTIDE SEQUENCE [LARGE SCALE GENOMIC DNA]</scope>
    <source>
        <strain>PC1</strain>
    </source>
</reference>
<evidence type="ECO:0000255" key="1">
    <source>
        <dbReference type="HAMAP-Rule" id="MF_00267"/>
    </source>
</evidence>
<organism>
    <name type="scientific">Pectobacterium carotovorum subsp. carotovorum (strain PC1)</name>
    <dbReference type="NCBI Taxonomy" id="561230"/>
    <lineage>
        <taxon>Bacteria</taxon>
        <taxon>Pseudomonadati</taxon>
        <taxon>Pseudomonadota</taxon>
        <taxon>Gammaproteobacteria</taxon>
        <taxon>Enterobacterales</taxon>
        <taxon>Pectobacteriaceae</taxon>
        <taxon>Pectobacterium</taxon>
    </lineage>
</organism>
<comment type="function">
    <text evidence="1">Cell division inhibitor that blocks the formation of polar Z ring septums. Rapidly oscillates between the poles of the cell to destabilize FtsZ filaments that have formed before they mature into polar Z rings. Prevents FtsZ polymerization.</text>
</comment>
<comment type="subunit">
    <text evidence="1">Interacts with MinD and FtsZ.</text>
</comment>
<comment type="similarity">
    <text evidence="1">Belongs to the MinC family.</text>
</comment>
<gene>
    <name evidence="1" type="primary">minC</name>
    <name type="ordered locus">PC1_1940</name>
</gene>
<accession>C6DG38</accession>
<feature type="chain" id="PRO_1000204699" description="Probable septum site-determining protein MinC">
    <location>
        <begin position="1"/>
        <end position="228"/>
    </location>
</feature>
<keyword id="KW-0131">Cell cycle</keyword>
<keyword id="KW-0132">Cell division</keyword>
<keyword id="KW-0717">Septation</keyword>
<sequence>MSQTPIELKGSSFTLSVVHLHDSQPEVIYQALQEKIEQAPAFLKNAPVVINVAALTAETDWIKLQQAISSTGLHVVGVSGCTDDALKKTIAQAGLPLLSEGKAQRRVVEPVAAVPAAVKTKVINTPVRSGQQIYARNCDLIVTSSVSAGAEVIADGNIHIYGMMRGRALAGVSGDVQSQIFCTHLAAELVSIAGRYWLSDQIPEPYFGQPARINLNQLDNVLTIKPLD</sequence>
<protein>
    <recommendedName>
        <fullName evidence="1">Probable septum site-determining protein MinC</fullName>
    </recommendedName>
</protein>
<name>MINC_PECCP</name>
<dbReference type="EMBL" id="CP001657">
    <property type="protein sequence ID" value="ACT12981.1"/>
    <property type="molecule type" value="Genomic_DNA"/>
</dbReference>
<dbReference type="RefSeq" id="WP_010275486.1">
    <property type="nucleotide sequence ID" value="NC_012917.1"/>
</dbReference>
<dbReference type="SMR" id="C6DG38"/>
<dbReference type="STRING" id="561230.PC1_1940"/>
<dbReference type="GeneID" id="67793939"/>
<dbReference type="KEGG" id="pct:PC1_1940"/>
<dbReference type="eggNOG" id="COG0850">
    <property type="taxonomic scope" value="Bacteria"/>
</dbReference>
<dbReference type="HOGENOM" id="CLU_067812_0_1_6"/>
<dbReference type="OrthoDB" id="9794530at2"/>
<dbReference type="Proteomes" id="UP000002736">
    <property type="component" value="Chromosome"/>
</dbReference>
<dbReference type="GO" id="GO:0000902">
    <property type="term" value="P:cell morphogenesis"/>
    <property type="evidence" value="ECO:0007669"/>
    <property type="project" value="InterPro"/>
</dbReference>
<dbReference type="GO" id="GO:0000917">
    <property type="term" value="P:division septum assembly"/>
    <property type="evidence" value="ECO:0007669"/>
    <property type="project" value="UniProtKB-KW"/>
</dbReference>
<dbReference type="GO" id="GO:0051302">
    <property type="term" value="P:regulation of cell division"/>
    <property type="evidence" value="ECO:0007669"/>
    <property type="project" value="InterPro"/>
</dbReference>
<dbReference type="GO" id="GO:1901891">
    <property type="term" value="P:regulation of cell septum assembly"/>
    <property type="evidence" value="ECO:0007669"/>
    <property type="project" value="InterPro"/>
</dbReference>
<dbReference type="Gene3D" id="2.160.20.70">
    <property type="match status" value="1"/>
</dbReference>
<dbReference type="Gene3D" id="3.30.70.260">
    <property type="match status" value="1"/>
</dbReference>
<dbReference type="HAMAP" id="MF_00267">
    <property type="entry name" value="MinC"/>
    <property type="match status" value="1"/>
</dbReference>
<dbReference type="InterPro" id="IPR016098">
    <property type="entry name" value="CAP/MinC_C"/>
</dbReference>
<dbReference type="InterPro" id="IPR013033">
    <property type="entry name" value="MinC"/>
</dbReference>
<dbReference type="InterPro" id="IPR036145">
    <property type="entry name" value="MinC_C_sf"/>
</dbReference>
<dbReference type="InterPro" id="IPR007874">
    <property type="entry name" value="MinC_N"/>
</dbReference>
<dbReference type="InterPro" id="IPR005526">
    <property type="entry name" value="Septum_form_inhib_MinC_C"/>
</dbReference>
<dbReference type="NCBIfam" id="TIGR01222">
    <property type="entry name" value="minC"/>
    <property type="match status" value="1"/>
</dbReference>
<dbReference type="PANTHER" id="PTHR34108">
    <property type="entry name" value="SEPTUM SITE-DETERMINING PROTEIN MINC"/>
    <property type="match status" value="1"/>
</dbReference>
<dbReference type="PANTHER" id="PTHR34108:SF1">
    <property type="entry name" value="SEPTUM SITE-DETERMINING PROTEIN MINC"/>
    <property type="match status" value="1"/>
</dbReference>
<dbReference type="Pfam" id="PF03775">
    <property type="entry name" value="MinC_C"/>
    <property type="match status" value="1"/>
</dbReference>
<dbReference type="Pfam" id="PF05209">
    <property type="entry name" value="MinC_N"/>
    <property type="match status" value="1"/>
</dbReference>
<dbReference type="SUPFAM" id="SSF63848">
    <property type="entry name" value="Cell-division inhibitor MinC, C-terminal domain"/>
    <property type="match status" value="1"/>
</dbReference>
<proteinExistence type="inferred from homology"/>